<reference key="1">
    <citation type="journal article" date="1999" name="Nature">
        <title>Sequence and analysis of chromosome 2 of the plant Arabidopsis thaliana.</title>
        <authorList>
            <person name="Lin X."/>
            <person name="Kaul S."/>
            <person name="Rounsley S.D."/>
            <person name="Shea T.P."/>
            <person name="Benito M.-I."/>
            <person name="Town C.D."/>
            <person name="Fujii C.Y."/>
            <person name="Mason T.M."/>
            <person name="Bowman C.L."/>
            <person name="Barnstead M.E."/>
            <person name="Feldblyum T.V."/>
            <person name="Buell C.R."/>
            <person name="Ketchum K.A."/>
            <person name="Lee J.J."/>
            <person name="Ronning C.M."/>
            <person name="Koo H.L."/>
            <person name="Moffat K.S."/>
            <person name="Cronin L.A."/>
            <person name="Shen M."/>
            <person name="Pai G."/>
            <person name="Van Aken S."/>
            <person name="Umayam L."/>
            <person name="Tallon L.J."/>
            <person name="Gill J.E."/>
            <person name="Adams M.D."/>
            <person name="Carrera A.J."/>
            <person name="Creasy T.H."/>
            <person name="Goodman H.M."/>
            <person name="Somerville C.R."/>
            <person name="Copenhaver G.P."/>
            <person name="Preuss D."/>
            <person name="Nierman W.C."/>
            <person name="White O."/>
            <person name="Eisen J.A."/>
            <person name="Salzberg S.L."/>
            <person name="Fraser C.M."/>
            <person name="Venter J.C."/>
        </authorList>
    </citation>
    <scope>NUCLEOTIDE SEQUENCE [LARGE SCALE GENOMIC DNA]</scope>
    <source>
        <strain>cv. Columbia</strain>
    </source>
</reference>
<reference key="2">
    <citation type="journal article" date="2017" name="Plant J.">
        <title>Araport11: a complete reannotation of the Arabidopsis thaliana reference genome.</title>
        <authorList>
            <person name="Cheng C.Y."/>
            <person name="Krishnakumar V."/>
            <person name="Chan A.P."/>
            <person name="Thibaud-Nissen F."/>
            <person name="Schobel S."/>
            <person name="Town C.D."/>
        </authorList>
    </citation>
    <scope>GENOME REANNOTATION</scope>
    <source>
        <strain>cv. Columbia</strain>
    </source>
</reference>
<reference key="3">
    <citation type="journal article" date="2003" name="Science">
        <title>Empirical analysis of transcriptional activity in the Arabidopsis genome.</title>
        <authorList>
            <person name="Yamada K."/>
            <person name="Lim J."/>
            <person name="Dale J.M."/>
            <person name="Chen H."/>
            <person name="Shinn P."/>
            <person name="Palm C.J."/>
            <person name="Southwick A.M."/>
            <person name="Wu H.C."/>
            <person name="Kim C.J."/>
            <person name="Nguyen M."/>
            <person name="Pham P.K."/>
            <person name="Cheuk R.F."/>
            <person name="Karlin-Newmann G."/>
            <person name="Liu S.X."/>
            <person name="Lam B."/>
            <person name="Sakano H."/>
            <person name="Wu T."/>
            <person name="Yu G."/>
            <person name="Miranda M."/>
            <person name="Quach H.L."/>
            <person name="Tripp M."/>
            <person name="Chang C.H."/>
            <person name="Lee J.M."/>
            <person name="Toriumi M.J."/>
            <person name="Chan M.M."/>
            <person name="Tang C.C."/>
            <person name="Onodera C.S."/>
            <person name="Deng J.M."/>
            <person name="Akiyama K."/>
            <person name="Ansari Y."/>
            <person name="Arakawa T."/>
            <person name="Banh J."/>
            <person name="Banno F."/>
            <person name="Bowser L."/>
            <person name="Brooks S.Y."/>
            <person name="Carninci P."/>
            <person name="Chao Q."/>
            <person name="Choy N."/>
            <person name="Enju A."/>
            <person name="Goldsmith A.D."/>
            <person name="Gurjal M."/>
            <person name="Hansen N.F."/>
            <person name="Hayashizaki Y."/>
            <person name="Johnson-Hopson C."/>
            <person name="Hsuan V.W."/>
            <person name="Iida K."/>
            <person name="Karnes M."/>
            <person name="Khan S."/>
            <person name="Koesema E."/>
            <person name="Ishida J."/>
            <person name="Jiang P.X."/>
            <person name="Jones T."/>
            <person name="Kawai J."/>
            <person name="Kamiya A."/>
            <person name="Meyers C."/>
            <person name="Nakajima M."/>
            <person name="Narusaka M."/>
            <person name="Seki M."/>
            <person name="Sakurai T."/>
            <person name="Satou M."/>
            <person name="Tamse R."/>
            <person name="Vaysberg M."/>
            <person name="Wallender E.K."/>
            <person name="Wong C."/>
            <person name="Yamamura Y."/>
            <person name="Yuan S."/>
            <person name="Shinozaki K."/>
            <person name="Davis R.W."/>
            <person name="Theologis A."/>
            <person name="Ecker J.R."/>
        </authorList>
    </citation>
    <scope>NUCLEOTIDE SEQUENCE [LARGE SCALE MRNA]</scope>
    <source>
        <strain>cv. Columbia</strain>
    </source>
</reference>
<reference key="4">
    <citation type="submission" date="2005-03" db="EMBL/GenBank/DDBJ databases">
        <title>Large-scale analysis of RIKEN Arabidopsis full-length (RAFL) cDNAs.</title>
        <authorList>
            <person name="Totoki Y."/>
            <person name="Seki M."/>
            <person name="Ishida J."/>
            <person name="Nakajima M."/>
            <person name="Enju A."/>
            <person name="Kamiya A."/>
            <person name="Narusaka M."/>
            <person name="Shin-i T."/>
            <person name="Nakagawa M."/>
            <person name="Sakamoto N."/>
            <person name="Oishi K."/>
            <person name="Kohara Y."/>
            <person name="Kobayashi M."/>
            <person name="Toyoda A."/>
            <person name="Sakaki Y."/>
            <person name="Sakurai T."/>
            <person name="Iida K."/>
            <person name="Akiyama K."/>
            <person name="Satou M."/>
            <person name="Toyoda T."/>
            <person name="Konagaya A."/>
            <person name="Carninci P."/>
            <person name="Kawai J."/>
            <person name="Hayashizaki Y."/>
            <person name="Shinozaki K."/>
        </authorList>
    </citation>
    <scope>NUCLEOTIDE SEQUENCE [LARGE SCALE MRNA] OF 496-649</scope>
    <source>
        <strain>cv. Columbia</strain>
    </source>
</reference>
<reference key="5">
    <citation type="journal article" date="2001" name="J. Biol. Chem.">
        <title>The Arabidopsis thaliana ABC protein superfamily, a complete inventory.</title>
        <authorList>
            <person name="Sanchez-Fernandez R."/>
            <person name="Davies T.G."/>
            <person name="Coleman J.O."/>
            <person name="Rea P.A."/>
        </authorList>
    </citation>
    <scope>GENE FAMILY</scope>
    <scope>NOMENCLATURE</scope>
</reference>
<reference key="6">
    <citation type="journal article" date="2008" name="Trends Plant Sci.">
        <title>Plant ABC proteins - a unified nomenclature and updated inventory.</title>
        <authorList>
            <person name="Verrier P.J."/>
            <person name="Bird D."/>
            <person name="Burla B."/>
            <person name="Dassa E."/>
            <person name="Forestier C."/>
            <person name="Geisler M."/>
            <person name="Klein M."/>
            <person name="Kolukisaoglu H.U."/>
            <person name="Lee Y."/>
            <person name="Martinoia E."/>
            <person name="Murphy A."/>
            <person name="Rea P.A."/>
            <person name="Samuels L."/>
            <person name="Schulz B."/>
            <person name="Spalding E.J."/>
            <person name="Yazaki K."/>
            <person name="Theodoulou F.L."/>
        </authorList>
    </citation>
    <scope>GENE FAMILY</scope>
    <scope>NOMENCLATURE</scope>
</reference>
<dbReference type="EMBL" id="AC007063">
    <property type="protein sequence ID" value="AAD22683.1"/>
    <property type="molecule type" value="Genomic_DNA"/>
</dbReference>
<dbReference type="EMBL" id="CP002685">
    <property type="protein sequence ID" value="AEC06245.1"/>
    <property type="molecule type" value="Genomic_DNA"/>
</dbReference>
<dbReference type="EMBL" id="AY039972">
    <property type="protein sequence ID" value="AAK64149.1"/>
    <property type="molecule type" value="mRNA"/>
</dbReference>
<dbReference type="EMBL" id="AY133881">
    <property type="protein sequence ID" value="AAM91815.1"/>
    <property type="molecule type" value="mRNA"/>
</dbReference>
<dbReference type="EMBL" id="AK220826">
    <property type="protein sequence ID" value="BAD94128.1"/>
    <property type="molecule type" value="mRNA"/>
</dbReference>
<dbReference type="PIR" id="A84509">
    <property type="entry name" value="A84509"/>
</dbReference>
<dbReference type="RefSeq" id="NP_178984.1">
    <property type="nucleotide sequence ID" value="NM_126940.3"/>
</dbReference>
<dbReference type="SMR" id="Q9SIT6"/>
<dbReference type="FunCoup" id="Q9SIT6">
    <property type="interactions" value="76"/>
</dbReference>
<dbReference type="STRING" id="3702.Q9SIT6"/>
<dbReference type="PaxDb" id="3702-AT2G13610.1"/>
<dbReference type="ProteomicsDB" id="244574"/>
<dbReference type="EnsemblPlants" id="AT2G13610.1">
    <property type="protein sequence ID" value="AT2G13610.1"/>
    <property type="gene ID" value="AT2G13610"/>
</dbReference>
<dbReference type="GeneID" id="815846"/>
<dbReference type="Gramene" id="AT2G13610.1">
    <property type="protein sequence ID" value="AT2G13610.1"/>
    <property type="gene ID" value="AT2G13610"/>
</dbReference>
<dbReference type="KEGG" id="ath:AT2G13610"/>
<dbReference type="Araport" id="AT2G13610"/>
<dbReference type="TAIR" id="AT2G13610">
    <property type="gene designation" value="ABCG5"/>
</dbReference>
<dbReference type="eggNOG" id="KOG0061">
    <property type="taxonomic scope" value="Eukaryota"/>
</dbReference>
<dbReference type="HOGENOM" id="CLU_000604_57_8_1"/>
<dbReference type="InParanoid" id="Q9SIT6"/>
<dbReference type="OMA" id="NFMAFLH"/>
<dbReference type="PhylomeDB" id="Q9SIT6"/>
<dbReference type="PRO" id="PR:Q9SIT6"/>
<dbReference type="Proteomes" id="UP000006548">
    <property type="component" value="Chromosome 2"/>
</dbReference>
<dbReference type="ExpressionAtlas" id="Q9SIT6">
    <property type="expression patterns" value="baseline and differential"/>
</dbReference>
<dbReference type="GO" id="GO:0016020">
    <property type="term" value="C:membrane"/>
    <property type="evidence" value="ECO:0007669"/>
    <property type="project" value="UniProtKB-SubCell"/>
</dbReference>
<dbReference type="GO" id="GO:0140359">
    <property type="term" value="F:ABC-type transporter activity"/>
    <property type="evidence" value="ECO:0007669"/>
    <property type="project" value="InterPro"/>
</dbReference>
<dbReference type="GO" id="GO:0005524">
    <property type="term" value="F:ATP binding"/>
    <property type="evidence" value="ECO:0007669"/>
    <property type="project" value="UniProtKB-KW"/>
</dbReference>
<dbReference type="GO" id="GO:0016887">
    <property type="term" value="F:ATP hydrolysis activity"/>
    <property type="evidence" value="ECO:0007669"/>
    <property type="project" value="InterPro"/>
</dbReference>
<dbReference type="FunFam" id="3.40.50.300:FF:001644">
    <property type="entry name" value="ABC transporter G family member 5"/>
    <property type="match status" value="1"/>
</dbReference>
<dbReference type="Gene3D" id="3.40.50.300">
    <property type="entry name" value="P-loop containing nucleotide triphosphate hydrolases"/>
    <property type="match status" value="1"/>
</dbReference>
<dbReference type="InterPro" id="IPR003593">
    <property type="entry name" value="AAA+_ATPase"/>
</dbReference>
<dbReference type="InterPro" id="IPR013525">
    <property type="entry name" value="ABC2_TM"/>
</dbReference>
<dbReference type="InterPro" id="IPR003439">
    <property type="entry name" value="ABC_transporter-like_ATP-bd"/>
</dbReference>
<dbReference type="InterPro" id="IPR017871">
    <property type="entry name" value="ABC_transporter-like_CS"/>
</dbReference>
<dbReference type="InterPro" id="IPR050352">
    <property type="entry name" value="ABCG_transporters"/>
</dbReference>
<dbReference type="InterPro" id="IPR027417">
    <property type="entry name" value="P-loop_NTPase"/>
</dbReference>
<dbReference type="PANTHER" id="PTHR48041">
    <property type="entry name" value="ABC TRANSPORTER G FAMILY MEMBER 28"/>
    <property type="match status" value="1"/>
</dbReference>
<dbReference type="PANTHER" id="PTHR48041:SF79">
    <property type="entry name" value="ABC TRANSPORTER G FAMILY MEMBER 5"/>
    <property type="match status" value="1"/>
</dbReference>
<dbReference type="Pfam" id="PF01061">
    <property type="entry name" value="ABC2_membrane"/>
    <property type="match status" value="1"/>
</dbReference>
<dbReference type="Pfam" id="PF00005">
    <property type="entry name" value="ABC_tran"/>
    <property type="match status" value="1"/>
</dbReference>
<dbReference type="SMART" id="SM00382">
    <property type="entry name" value="AAA"/>
    <property type="match status" value="1"/>
</dbReference>
<dbReference type="SUPFAM" id="SSF52540">
    <property type="entry name" value="P-loop containing nucleoside triphosphate hydrolases"/>
    <property type="match status" value="1"/>
</dbReference>
<dbReference type="PROSITE" id="PS00211">
    <property type="entry name" value="ABC_TRANSPORTER_1"/>
    <property type="match status" value="1"/>
</dbReference>
<dbReference type="PROSITE" id="PS50893">
    <property type="entry name" value="ABC_TRANSPORTER_2"/>
    <property type="match status" value="1"/>
</dbReference>
<comment type="subcellular location">
    <subcellularLocation>
        <location evidence="1">Membrane</location>
        <topology evidence="1">Multi-pass membrane protein</topology>
    </subcellularLocation>
</comment>
<comment type="similarity">
    <text evidence="5">Belongs to the ABC transporter superfamily. ABCG family. Eye pigment precursor importer (TC 3.A.1.204) subfamily.</text>
</comment>
<protein>
    <recommendedName>
        <fullName>ABC transporter G family member 5</fullName>
        <shortName>ABC transporter ABCG.5</shortName>
        <shortName>AtABCG5</shortName>
    </recommendedName>
    <alternativeName>
        <fullName>White-brown complex homolog protein 5</fullName>
        <shortName>AtWBC5</shortName>
    </alternativeName>
</protein>
<evidence type="ECO:0000250" key="1"/>
<evidence type="ECO:0000255" key="2"/>
<evidence type="ECO:0000255" key="3">
    <source>
        <dbReference type="PROSITE-ProRule" id="PRU00434"/>
    </source>
</evidence>
<evidence type="ECO:0000256" key="4">
    <source>
        <dbReference type="SAM" id="MobiDB-lite"/>
    </source>
</evidence>
<evidence type="ECO:0000305" key="5"/>
<organism>
    <name type="scientific">Arabidopsis thaliana</name>
    <name type="common">Mouse-ear cress</name>
    <dbReference type="NCBI Taxonomy" id="3702"/>
    <lineage>
        <taxon>Eukaryota</taxon>
        <taxon>Viridiplantae</taxon>
        <taxon>Streptophyta</taxon>
        <taxon>Embryophyta</taxon>
        <taxon>Tracheophyta</taxon>
        <taxon>Spermatophyta</taxon>
        <taxon>Magnoliopsida</taxon>
        <taxon>eudicotyledons</taxon>
        <taxon>Gunneridae</taxon>
        <taxon>Pentapetalae</taxon>
        <taxon>rosids</taxon>
        <taxon>malvids</taxon>
        <taxon>Brassicales</taxon>
        <taxon>Brassicaceae</taxon>
        <taxon>Camelineae</taxon>
        <taxon>Arabidopsis</taxon>
    </lineage>
</organism>
<proteinExistence type="evidence at transcript level"/>
<name>AB5G_ARATH</name>
<keyword id="KW-0067">ATP-binding</keyword>
<keyword id="KW-0472">Membrane</keyword>
<keyword id="KW-0547">Nucleotide-binding</keyword>
<keyword id="KW-1185">Reference proteome</keyword>
<keyword id="KW-0812">Transmembrane</keyword>
<keyword id="KW-1133">Transmembrane helix</keyword>
<keyword id="KW-0813">Transport</keyword>
<gene>
    <name type="primary">ABCG5</name>
    <name type="synonym">WBC5</name>
    <name type="ordered locus">At2g13610</name>
    <name type="ORF">T10F5.15</name>
</gene>
<accession>Q9SIT6</accession>
<accession>Q56ZY4</accession>
<sequence length="649" mass="73314">MEKQGCEIEALDIDYNIFVRKINVNPFGIFRRKPRPEADQPVKTEEESLKLEDETGNKVKHVLKGVTCRAKPWEILAIVGPSGAGKSSLLEILAARLIPQTGSVYVNKRPVDRANFKKISGYVTQKDTLFPLLTVEETLLFSAKLRLKLPADELRSRVKSLVHELGLEAVATARVGDDSVRGISGGERRRVSIGVEVIHDPKVLILDEPTSGLDSTSALLIIDMLKHMAETRGRTIILTIHQPGFRIVKQFNSVLLLANGSTLKQGSVDQLGVYLRSNGLHPPLHENIVEFAIESIESITKQQRLQESRRAAHVLTPQTTLQEKRSEDSQGESKSGKFTLQQLFQQTRVADVGTMNIATEFTRDFANSRLEETMILTHRFSKNIFRTKELFACRTVQMLGSGIVLGLIFHNLKDDLKGARERVGLFAFILTFLLTSTIEALPIFLQEREILMKETSSGSYRVSSYAVANGLVYLPFLLILAILFSTPVYWLVGLNPSFMAFLHFSLLIWLILYTANSVVVCFSALVPNFIVGNSVISGVMGSFFLFSGYFISNHEIPGYWIFMHYISLFKYPFEGFLINEFSKSNKCLEYGFGKCLVTEEDLLKEERYGEESRWRNVVIMLCFVLLYRFISYVILRCRCSQRSFKTTLA</sequence>
<feature type="chain" id="PRO_0000240677" description="ABC transporter G family member 5">
    <location>
        <begin position="1"/>
        <end position="649"/>
    </location>
</feature>
<feature type="transmembrane region" description="Helical" evidence="2">
    <location>
        <begin position="390"/>
        <end position="410"/>
    </location>
</feature>
<feature type="transmembrane region" description="Helical" evidence="2">
    <location>
        <begin position="425"/>
        <end position="445"/>
    </location>
</feature>
<feature type="transmembrane region" description="Helical" evidence="2">
    <location>
        <begin position="474"/>
        <end position="494"/>
    </location>
</feature>
<feature type="transmembrane region" description="Helical" evidence="2">
    <location>
        <begin position="506"/>
        <end position="526"/>
    </location>
</feature>
<feature type="transmembrane region" description="Helical" evidence="2">
    <location>
        <begin position="529"/>
        <end position="549"/>
    </location>
</feature>
<feature type="transmembrane region" description="Helical" evidence="2">
    <location>
        <begin position="617"/>
        <end position="637"/>
    </location>
</feature>
<feature type="domain" description="ABC transporter" evidence="3">
    <location>
        <begin position="42"/>
        <end position="284"/>
    </location>
</feature>
<feature type="domain" description="ABC transmembrane type-2">
    <location>
        <begin position="371"/>
        <end position="581"/>
    </location>
</feature>
<feature type="region of interest" description="Disordered" evidence="4">
    <location>
        <begin position="308"/>
        <end position="336"/>
    </location>
</feature>
<feature type="binding site" evidence="3">
    <location>
        <begin position="80"/>
        <end position="87"/>
    </location>
    <ligand>
        <name>ATP</name>
        <dbReference type="ChEBI" id="CHEBI:30616"/>
    </ligand>
</feature>